<gene>
    <name evidence="1" type="primary">pepQ</name>
    <name type="ordered locus">Spro_0263</name>
</gene>
<sequence>METLASLYNDHLAELQKRAREVLTRNKLDALLIHSGELQRIFQDDRSYPFKVNAHFKAWVPVTSVPNCWLWVDGVNKPKLWFYSPVDYWHSVEPLPESFWTRSVELMPLANADDIAQQLPAQRERVGYIGYAQQRARDLGILAENVNPKAVLNYLDFHRSIKTGYELACMREAQKTAVMGHRAAHEAFLSGMSEFDINQAYLTATGHRDTDVPYDNIVALNEHASVLHYTTLDHQPPSEMLSFLLDAGAEYNGYAADLTRTYAGQSGSDFAQLIKDLNGEQLALMDTIKAGVRYTDYHVQMHQRVAKLLKSHKLVTGISEEAMVEQGLTTPFLPHGLGHPLGLQVHDSAGFMQDEQGTHLAAPSKYPYLRCTRMLQPGMVLTIEPGMYFIDSLLAPWRSGEFSQHFAWDRIDALKPYGGIRIEDNIVIHEKRIENMTRDLNLA</sequence>
<protein>
    <recommendedName>
        <fullName evidence="1">Xaa-Pro dipeptidase</fullName>
        <shortName evidence="1">X-Pro dipeptidase</shortName>
        <ecNumber evidence="1">3.4.13.9</ecNumber>
    </recommendedName>
    <alternativeName>
        <fullName evidence="1">Imidodipeptidase</fullName>
    </alternativeName>
    <alternativeName>
        <fullName evidence="1">Proline dipeptidase</fullName>
        <shortName evidence="1">Prolidase</shortName>
    </alternativeName>
</protein>
<proteinExistence type="inferred from homology"/>
<reference key="1">
    <citation type="submission" date="2007-09" db="EMBL/GenBank/DDBJ databases">
        <title>Complete sequence of chromosome of Serratia proteamaculans 568.</title>
        <authorList>
            <consortium name="US DOE Joint Genome Institute"/>
            <person name="Copeland A."/>
            <person name="Lucas S."/>
            <person name="Lapidus A."/>
            <person name="Barry K."/>
            <person name="Glavina del Rio T."/>
            <person name="Dalin E."/>
            <person name="Tice H."/>
            <person name="Pitluck S."/>
            <person name="Chain P."/>
            <person name="Malfatti S."/>
            <person name="Shin M."/>
            <person name="Vergez L."/>
            <person name="Schmutz J."/>
            <person name="Larimer F."/>
            <person name="Land M."/>
            <person name="Hauser L."/>
            <person name="Kyrpides N."/>
            <person name="Kim E."/>
            <person name="Taghavi S."/>
            <person name="Newman L."/>
            <person name="Vangronsveld J."/>
            <person name="van der Lelie D."/>
            <person name="Richardson P."/>
        </authorList>
    </citation>
    <scope>NUCLEOTIDE SEQUENCE [LARGE SCALE GENOMIC DNA]</scope>
    <source>
        <strain>568</strain>
    </source>
</reference>
<comment type="function">
    <text evidence="1">Splits dipeptides with a prolyl residue in the C-terminal position.</text>
</comment>
<comment type="catalytic activity">
    <reaction evidence="1">
        <text>Xaa-L-Pro dipeptide + H2O = an L-alpha-amino acid + L-proline</text>
        <dbReference type="Rhea" id="RHEA:76407"/>
        <dbReference type="ChEBI" id="CHEBI:15377"/>
        <dbReference type="ChEBI" id="CHEBI:59869"/>
        <dbReference type="ChEBI" id="CHEBI:60039"/>
        <dbReference type="ChEBI" id="CHEBI:195196"/>
        <dbReference type="EC" id="3.4.13.9"/>
    </reaction>
</comment>
<comment type="cofactor">
    <cofactor evidence="1">
        <name>Mn(2+)</name>
        <dbReference type="ChEBI" id="CHEBI:29035"/>
    </cofactor>
    <text evidence="1">Binds 2 manganese ions per subunit.</text>
</comment>
<comment type="similarity">
    <text evidence="1">Belongs to the peptidase M24B family. Bacterial-type prolidase subfamily.</text>
</comment>
<accession>A8G8D3</accession>
<evidence type="ECO:0000255" key="1">
    <source>
        <dbReference type="HAMAP-Rule" id="MF_01279"/>
    </source>
</evidence>
<name>PEPQ_SERP5</name>
<organism>
    <name type="scientific">Serratia proteamaculans (strain 568)</name>
    <dbReference type="NCBI Taxonomy" id="399741"/>
    <lineage>
        <taxon>Bacteria</taxon>
        <taxon>Pseudomonadati</taxon>
        <taxon>Pseudomonadota</taxon>
        <taxon>Gammaproteobacteria</taxon>
        <taxon>Enterobacterales</taxon>
        <taxon>Yersiniaceae</taxon>
        <taxon>Serratia</taxon>
    </lineage>
</organism>
<keyword id="KW-0224">Dipeptidase</keyword>
<keyword id="KW-0378">Hydrolase</keyword>
<keyword id="KW-0464">Manganese</keyword>
<keyword id="KW-0479">Metal-binding</keyword>
<keyword id="KW-0482">Metalloprotease</keyword>
<keyword id="KW-0645">Protease</keyword>
<feature type="chain" id="PRO_1000067405" description="Xaa-Pro dipeptidase">
    <location>
        <begin position="1"/>
        <end position="443"/>
    </location>
</feature>
<feature type="binding site" evidence="1">
    <location>
        <position position="246"/>
    </location>
    <ligand>
        <name>Mn(2+)</name>
        <dbReference type="ChEBI" id="CHEBI:29035"/>
        <label>2</label>
    </ligand>
</feature>
<feature type="binding site" evidence="1">
    <location>
        <position position="257"/>
    </location>
    <ligand>
        <name>Mn(2+)</name>
        <dbReference type="ChEBI" id="CHEBI:29035"/>
        <label>1</label>
    </ligand>
</feature>
<feature type="binding site" evidence="1">
    <location>
        <position position="257"/>
    </location>
    <ligand>
        <name>Mn(2+)</name>
        <dbReference type="ChEBI" id="CHEBI:29035"/>
        <label>2</label>
    </ligand>
</feature>
<feature type="binding site" evidence="1">
    <location>
        <position position="339"/>
    </location>
    <ligand>
        <name>Mn(2+)</name>
        <dbReference type="ChEBI" id="CHEBI:29035"/>
        <label>1</label>
    </ligand>
</feature>
<feature type="binding site" evidence="1">
    <location>
        <position position="384"/>
    </location>
    <ligand>
        <name>Mn(2+)</name>
        <dbReference type="ChEBI" id="CHEBI:29035"/>
        <label>1</label>
    </ligand>
</feature>
<feature type="binding site" evidence="1">
    <location>
        <position position="423"/>
    </location>
    <ligand>
        <name>Mn(2+)</name>
        <dbReference type="ChEBI" id="CHEBI:29035"/>
        <label>1</label>
    </ligand>
</feature>
<feature type="binding site" evidence="1">
    <location>
        <position position="423"/>
    </location>
    <ligand>
        <name>Mn(2+)</name>
        <dbReference type="ChEBI" id="CHEBI:29035"/>
        <label>2</label>
    </ligand>
</feature>
<dbReference type="EC" id="3.4.13.9" evidence="1"/>
<dbReference type="EMBL" id="CP000826">
    <property type="protein sequence ID" value="ABV39373.1"/>
    <property type="molecule type" value="Genomic_DNA"/>
</dbReference>
<dbReference type="SMR" id="A8G8D3"/>
<dbReference type="STRING" id="399741.Spro_0263"/>
<dbReference type="MEROPS" id="M24.003"/>
<dbReference type="KEGG" id="spe:Spro_0263"/>
<dbReference type="eggNOG" id="COG0006">
    <property type="taxonomic scope" value="Bacteria"/>
</dbReference>
<dbReference type="HOGENOM" id="CLU_050675_0_0_6"/>
<dbReference type="OrthoDB" id="9806388at2"/>
<dbReference type="GO" id="GO:0005829">
    <property type="term" value="C:cytosol"/>
    <property type="evidence" value="ECO:0007669"/>
    <property type="project" value="TreeGrafter"/>
</dbReference>
<dbReference type="GO" id="GO:0004177">
    <property type="term" value="F:aminopeptidase activity"/>
    <property type="evidence" value="ECO:0007669"/>
    <property type="project" value="TreeGrafter"/>
</dbReference>
<dbReference type="GO" id="GO:0046872">
    <property type="term" value="F:metal ion binding"/>
    <property type="evidence" value="ECO:0007669"/>
    <property type="project" value="UniProtKB-KW"/>
</dbReference>
<dbReference type="GO" id="GO:0008235">
    <property type="term" value="F:metalloexopeptidase activity"/>
    <property type="evidence" value="ECO:0007669"/>
    <property type="project" value="UniProtKB-UniRule"/>
</dbReference>
<dbReference type="GO" id="GO:0016795">
    <property type="term" value="F:phosphoric triester hydrolase activity"/>
    <property type="evidence" value="ECO:0007669"/>
    <property type="project" value="InterPro"/>
</dbReference>
<dbReference type="GO" id="GO:0102009">
    <property type="term" value="F:proline dipeptidase activity"/>
    <property type="evidence" value="ECO:0007669"/>
    <property type="project" value="UniProtKB-EC"/>
</dbReference>
<dbReference type="GO" id="GO:0006508">
    <property type="term" value="P:proteolysis"/>
    <property type="evidence" value="ECO:0007669"/>
    <property type="project" value="UniProtKB-KW"/>
</dbReference>
<dbReference type="Gene3D" id="3.90.230.10">
    <property type="entry name" value="Creatinase/methionine aminopeptidase superfamily"/>
    <property type="match status" value="1"/>
</dbReference>
<dbReference type="Gene3D" id="3.40.350.10">
    <property type="entry name" value="Creatinase/prolidase N-terminal domain"/>
    <property type="match status" value="1"/>
</dbReference>
<dbReference type="HAMAP" id="MF_01279">
    <property type="entry name" value="X_Pro_dipeptid"/>
    <property type="match status" value="1"/>
</dbReference>
<dbReference type="InterPro" id="IPR029149">
    <property type="entry name" value="Creatin/AminoP/Spt16_N"/>
</dbReference>
<dbReference type="InterPro" id="IPR036005">
    <property type="entry name" value="Creatinase/aminopeptidase-like"/>
</dbReference>
<dbReference type="InterPro" id="IPR048819">
    <property type="entry name" value="PepQ_N"/>
</dbReference>
<dbReference type="InterPro" id="IPR000994">
    <property type="entry name" value="Pept_M24"/>
</dbReference>
<dbReference type="InterPro" id="IPR001131">
    <property type="entry name" value="Peptidase_M24B_aminopep-P_CS"/>
</dbReference>
<dbReference type="InterPro" id="IPR052433">
    <property type="entry name" value="X-Pro_dipept-like"/>
</dbReference>
<dbReference type="InterPro" id="IPR022846">
    <property type="entry name" value="X_Pro_dipept"/>
</dbReference>
<dbReference type="NCBIfam" id="NF010133">
    <property type="entry name" value="PRK13607.1"/>
    <property type="match status" value="1"/>
</dbReference>
<dbReference type="PANTHER" id="PTHR43226">
    <property type="entry name" value="XAA-PRO AMINOPEPTIDASE 3"/>
    <property type="match status" value="1"/>
</dbReference>
<dbReference type="PANTHER" id="PTHR43226:SF8">
    <property type="entry name" value="XAA-PRO DIPEPTIDASE"/>
    <property type="match status" value="1"/>
</dbReference>
<dbReference type="Pfam" id="PF21216">
    <property type="entry name" value="PepQ_N"/>
    <property type="match status" value="1"/>
</dbReference>
<dbReference type="Pfam" id="PF00557">
    <property type="entry name" value="Peptidase_M24"/>
    <property type="match status" value="1"/>
</dbReference>
<dbReference type="SUPFAM" id="SSF55920">
    <property type="entry name" value="Creatinase/aminopeptidase"/>
    <property type="match status" value="1"/>
</dbReference>
<dbReference type="PROSITE" id="PS00491">
    <property type="entry name" value="PROLINE_PEPTIDASE"/>
    <property type="match status" value="1"/>
</dbReference>